<organism>
    <name type="scientific">Halobacterium salinarum (strain ATCC 700922 / JCM 11081 / NRC-1)</name>
    <name type="common">Halobacterium halobium</name>
    <dbReference type="NCBI Taxonomy" id="64091"/>
    <lineage>
        <taxon>Archaea</taxon>
        <taxon>Methanobacteriati</taxon>
        <taxon>Methanobacteriota</taxon>
        <taxon>Stenosarchaea group</taxon>
        <taxon>Halobacteria</taxon>
        <taxon>Halobacteriales</taxon>
        <taxon>Halobacteriaceae</taxon>
        <taxon>Halobacterium</taxon>
        <taxon>Halobacterium salinarum NRC-34001</taxon>
    </lineage>
</organism>
<keyword id="KW-0067">ATP-binding</keyword>
<keyword id="KW-0131">Cell cycle</keyword>
<keyword id="KW-0132">Cell division</keyword>
<keyword id="KW-0227">DNA damage</keyword>
<keyword id="KW-0233">DNA recombination</keyword>
<keyword id="KW-0234">DNA repair</keyword>
<keyword id="KW-0235">DNA replication</keyword>
<keyword id="KW-0436">Ligase</keyword>
<keyword id="KW-0460">Magnesium</keyword>
<keyword id="KW-0479">Metal-binding</keyword>
<keyword id="KW-0547">Nucleotide-binding</keyword>
<keyword id="KW-1185">Reference proteome</keyword>
<evidence type="ECO:0000255" key="1">
    <source>
        <dbReference type="HAMAP-Rule" id="MF_00407"/>
    </source>
</evidence>
<feature type="chain" id="PRO_0000059602" description="DNA ligase">
    <location>
        <begin position="1"/>
        <end position="561"/>
    </location>
</feature>
<feature type="active site" description="N6-AMP-lysine intermediate" evidence="1">
    <location>
        <position position="255"/>
    </location>
</feature>
<feature type="binding site" evidence="1">
    <location>
        <position position="253"/>
    </location>
    <ligand>
        <name>ATP</name>
        <dbReference type="ChEBI" id="CHEBI:30616"/>
    </ligand>
</feature>
<feature type="binding site" evidence="1">
    <location>
        <position position="260"/>
    </location>
    <ligand>
        <name>ATP</name>
        <dbReference type="ChEBI" id="CHEBI:30616"/>
    </ligand>
</feature>
<feature type="binding site" evidence="1">
    <location>
        <position position="275"/>
    </location>
    <ligand>
        <name>ATP</name>
        <dbReference type="ChEBI" id="CHEBI:30616"/>
    </ligand>
</feature>
<feature type="binding site" evidence="1">
    <location>
        <position position="304"/>
    </location>
    <ligand>
        <name>ATP</name>
        <dbReference type="ChEBI" id="CHEBI:30616"/>
    </ligand>
</feature>
<feature type="binding site" evidence="1">
    <location>
        <position position="344"/>
    </location>
    <ligand>
        <name>ATP</name>
        <dbReference type="ChEBI" id="CHEBI:30616"/>
    </ligand>
</feature>
<feature type="binding site" evidence="1">
    <location>
        <position position="421"/>
    </location>
    <ligand>
        <name>ATP</name>
        <dbReference type="ChEBI" id="CHEBI:30616"/>
    </ligand>
</feature>
<feature type="binding site" evidence="1">
    <location>
        <position position="427"/>
    </location>
    <ligand>
        <name>ATP</name>
        <dbReference type="ChEBI" id="CHEBI:30616"/>
    </ligand>
</feature>
<comment type="function">
    <text evidence="1">DNA ligase that seals nicks in double-stranded DNA during DNA replication, DNA recombination and DNA repair.</text>
</comment>
<comment type="catalytic activity">
    <reaction evidence="1">
        <text>ATP + (deoxyribonucleotide)n-3'-hydroxyl + 5'-phospho-(deoxyribonucleotide)m = (deoxyribonucleotide)n+m + AMP + diphosphate.</text>
        <dbReference type="EC" id="6.5.1.1"/>
    </reaction>
</comment>
<comment type="cofactor">
    <cofactor evidence="1">
        <name>Mg(2+)</name>
        <dbReference type="ChEBI" id="CHEBI:18420"/>
    </cofactor>
</comment>
<comment type="similarity">
    <text evidence="1">Belongs to the ATP-dependent DNA ligase family.</text>
</comment>
<reference key="1">
    <citation type="journal article" date="2000" name="Proc. Natl. Acad. Sci. U.S.A.">
        <title>Genome sequence of Halobacterium species NRC-1.</title>
        <authorList>
            <person name="Ng W.V."/>
            <person name="Kennedy S.P."/>
            <person name="Mahairas G.G."/>
            <person name="Berquist B."/>
            <person name="Pan M."/>
            <person name="Shukla H.D."/>
            <person name="Lasky S.R."/>
            <person name="Baliga N.S."/>
            <person name="Thorsson V."/>
            <person name="Sbrogna J."/>
            <person name="Swartzell S."/>
            <person name="Weir D."/>
            <person name="Hall J."/>
            <person name="Dahl T.A."/>
            <person name="Welti R."/>
            <person name="Goo Y.A."/>
            <person name="Leithauser B."/>
            <person name="Keller K."/>
            <person name="Cruz R."/>
            <person name="Danson M.J."/>
            <person name="Hough D.W."/>
            <person name="Maddocks D.G."/>
            <person name="Jablonski P.E."/>
            <person name="Krebs M.P."/>
            <person name="Angevine C.M."/>
            <person name="Dale H."/>
            <person name="Isenbarger T.A."/>
            <person name="Peck R.F."/>
            <person name="Pohlschroder M."/>
            <person name="Spudich J.L."/>
            <person name="Jung K.-H."/>
            <person name="Alam M."/>
            <person name="Freitas T."/>
            <person name="Hou S."/>
            <person name="Daniels C.J."/>
            <person name="Dennis P.P."/>
            <person name="Omer A.D."/>
            <person name="Ebhardt H."/>
            <person name="Lowe T.M."/>
            <person name="Liang P."/>
            <person name="Riley M."/>
            <person name="Hood L."/>
            <person name="DasSarma S."/>
        </authorList>
    </citation>
    <scope>NUCLEOTIDE SEQUENCE [LARGE SCALE GENOMIC DNA]</scope>
    <source>
        <strain>ATCC 700922 / JCM 11081 / NRC-1</strain>
    </source>
</reference>
<sequence>MKFGSFATFAADIEATDADLDVVALVAELFDAADSDLDVVARFVQGRVFPAHSETKLDIGPQLCYTALSRAAGRNVDADDIEARLAETGDIGAVAGSLDLGGQTGLAAFGGGDDHADGLTVSGVADELAALAAAAGDGSQSEKVTLLFGLFNQCTSREARYLARLVLGEMRIGVGEGAVRDAIAEAFDVPTAAVQRALQVSNDYGLVAETARDSGTDALDAMGLEVGRPVQAMLAQAGTVTDALDEWHEAAVETKFDGARVQVHYDGDDVVLYSRNMENVTGALPELVEFVENNVTAPVIIDGEAVAADEDGDPLPFQEILKRFRRKHDVAAMREEISVELHAFDCLHAPSADGGEDLLDAPFSDRHRRLRSVVDDASAVSEVLVTDDADEIAAFEATALEGGHEGIMLKNPAAPYTPGDRGKDWLKRKPDVETLDLVVTGAEWGEGRRASVLGTFLLSARDAAGDGFETIGKVATGLTDEELAALSDRLEPHVRSEDGQTVDIEPAVVLEVGYEEIQASPTYSSGYALRFPRFVSVREDKTPTTADTIERVERLAAQQQQ</sequence>
<accession>Q9HR35</accession>
<gene>
    <name evidence="1" type="primary">lig</name>
    <name type="ordered locus">VNG_0881G</name>
</gene>
<dbReference type="EC" id="6.5.1.1" evidence="1"/>
<dbReference type="EMBL" id="AE004437">
    <property type="protein sequence ID" value="AAG19323.1"/>
    <property type="molecule type" value="Genomic_DNA"/>
</dbReference>
<dbReference type="PIR" id="G84244">
    <property type="entry name" value="G84244"/>
</dbReference>
<dbReference type="SMR" id="Q9HR35"/>
<dbReference type="FunCoup" id="Q9HR35">
    <property type="interactions" value="140"/>
</dbReference>
<dbReference type="STRING" id="64091.VNG_0881G"/>
<dbReference type="PaxDb" id="64091-VNG_0881G"/>
<dbReference type="KEGG" id="hal:VNG_0881G"/>
<dbReference type="PATRIC" id="fig|64091.14.peg.676"/>
<dbReference type="HOGENOM" id="CLU_005138_6_0_2"/>
<dbReference type="InParanoid" id="Q9HR35"/>
<dbReference type="OrthoDB" id="31274at2157"/>
<dbReference type="PhylomeDB" id="Q9HR35"/>
<dbReference type="Proteomes" id="UP000000554">
    <property type="component" value="Chromosome"/>
</dbReference>
<dbReference type="GO" id="GO:0005524">
    <property type="term" value="F:ATP binding"/>
    <property type="evidence" value="ECO:0007669"/>
    <property type="project" value="UniProtKB-UniRule"/>
</dbReference>
<dbReference type="GO" id="GO:0003677">
    <property type="term" value="F:DNA binding"/>
    <property type="evidence" value="ECO:0007669"/>
    <property type="project" value="InterPro"/>
</dbReference>
<dbReference type="GO" id="GO:0003910">
    <property type="term" value="F:DNA ligase (ATP) activity"/>
    <property type="evidence" value="ECO:0000318"/>
    <property type="project" value="GO_Central"/>
</dbReference>
<dbReference type="GO" id="GO:0046872">
    <property type="term" value="F:metal ion binding"/>
    <property type="evidence" value="ECO:0007669"/>
    <property type="project" value="UniProtKB-KW"/>
</dbReference>
<dbReference type="GO" id="GO:0051301">
    <property type="term" value="P:cell division"/>
    <property type="evidence" value="ECO:0007669"/>
    <property type="project" value="UniProtKB-KW"/>
</dbReference>
<dbReference type="GO" id="GO:0071897">
    <property type="term" value="P:DNA biosynthetic process"/>
    <property type="evidence" value="ECO:0007669"/>
    <property type="project" value="InterPro"/>
</dbReference>
<dbReference type="GO" id="GO:0006310">
    <property type="term" value="P:DNA recombination"/>
    <property type="evidence" value="ECO:0007669"/>
    <property type="project" value="UniProtKB-UniRule"/>
</dbReference>
<dbReference type="GO" id="GO:0006281">
    <property type="term" value="P:DNA repair"/>
    <property type="evidence" value="ECO:0007669"/>
    <property type="project" value="UniProtKB-UniRule"/>
</dbReference>
<dbReference type="GO" id="GO:0006273">
    <property type="term" value="P:lagging strand elongation"/>
    <property type="evidence" value="ECO:0000318"/>
    <property type="project" value="GO_Central"/>
</dbReference>
<dbReference type="CDD" id="cd07901">
    <property type="entry name" value="Adenylation_DNA_ligase_Arch_LigB"/>
    <property type="match status" value="1"/>
</dbReference>
<dbReference type="CDD" id="cd07972">
    <property type="entry name" value="OBF_DNA_ligase_Arch_LigB"/>
    <property type="match status" value="1"/>
</dbReference>
<dbReference type="FunFam" id="1.10.3260.10:FF:000007">
    <property type="entry name" value="DNA ligase"/>
    <property type="match status" value="1"/>
</dbReference>
<dbReference type="FunFam" id="2.40.50.140:FF:000163">
    <property type="entry name" value="Probable DNA ligase"/>
    <property type="match status" value="1"/>
</dbReference>
<dbReference type="FunFam" id="3.30.470.30:FF:000012">
    <property type="entry name" value="Probable DNA ligase"/>
    <property type="match status" value="1"/>
</dbReference>
<dbReference type="Gene3D" id="1.10.3260.10">
    <property type="entry name" value="DNA ligase, ATP-dependent, N-terminal domain"/>
    <property type="match status" value="1"/>
</dbReference>
<dbReference type="Gene3D" id="3.30.470.30">
    <property type="entry name" value="DNA ligase/mRNA capping enzyme"/>
    <property type="match status" value="1"/>
</dbReference>
<dbReference type="Gene3D" id="2.40.50.140">
    <property type="entry name" value="Nucleic acid-binding proteins"/>
    <property type="match status" value="1"/>
</dbReference>
<dbReference type="HAMAP" id="MF_00407">
    <property type="entry name" value="DNA_ligase"/>
    <property type="match status" value="1"/>
</dbReference>
<dbReference type="InterPro" id="IPR050191">
    <property type="entry name" value="ATP-dep_DNA_ligase"/>
</dbReference>
<dbReference type="InterPro" id="IPR022865">
    <property type="entry name" value="DNA_ligae_ATP-dep_bac/arc"/>
</dbReference>
<dbReference type="InterPro" id="IPR000977">
    <property type="entry name" value="DNA_ligase_ATP-dep"/>
</dbReference>
<dbReference type="InterPro" id="IPR012309">
    <property type="entry name" value="DNA_ligase_ATP-dep_C"/>
</dbReference>
<dbReference type="InterPro" id="IPR012310">
    <property type="entry name" value="DNA_ligase_ATP-dep_cent"/>
</dbReference>
<dbReference type="InterPro" id="IPR016059">
    <property type="entry name" value="DNA_ligase_ATP-dep_CS"/>
</dbReference>
<dbReference type="InterPro" id="IPR012308">
    <property type="entry name" value="DNA_ligase_ATP-dep_N"/>
</dbReference>
<dbReference type="InterPro" id="IPR036599">
    <property type="entry name" value="DNA_ligase_N_sf"/>
</dbReference>
<dbReference type="InterPro" id="IPR054890">
    <property type="entry name" value="LigA_Halo"/>
</dbReference>
<dbReference type="InterPro" id="IPR012340">
    <property type="entry name" value="NA-bd_OB-fold"/>
</dbReference>
<dbReference type="NCBIfam" id="TIGR00574">
    <property type="entry name" value="dnl1"/>
    <property type="match status" value="1"/>
</dbReference>
<dbReference type="NCBIfam" id="NF041331">
    <property type="entry name" value="LigA_Halo"/>
    <property type="match status" value="1"/>
</dbReference>
<dbReference type="PANTHER" id="PTHR45674:SF7">
    <property type="entry name" value="DNA LIGASE"/>
    <property type="match status" value="1"/>
</dbReference>
<dbReference type="PANTHER" id="PTHR45674">
    <property type="entry name" value="DNA LIGASE 1/3 FAMILY MEMBER"/>
    <property type="match status" value="1"/>
</dbReference>
<dbReference type="Pfam" id="PF04679">
    <property type="entry name" value="DNA_ligase_A_C"/>
    <property type="match status" value="1"/>
</dbReference>
<dbReference type="Pfam" id="PF01068">
    <property type="entry name" value="DNA_ligase_A_M"/>
    <property type="match status" value="1"/>
</dbReference>
<dbReference type="Pfam" id="PF04675">
    <property type="entry name" value="DNA_ligase_A_N"/>
    <property type="match status" value="1"/>
</dbReference>
<dbReference type="SUPFAM" id="SSF117018">
    <property type="entry name" value="ATP-dependent DNA ligase DNA-binding domain"/>
    <property type="match status" value="1"/>
</dbReference>
<dbReference type="SUPFAM" id="SSF56091">
    <property type="entry name" value="DNA ligase/mRNA capping enzyme, catalytic domain"/>
    <property type="match status" value="1"/>
</dbReference>
<dbReference type="SUPFAM" id="SSF50249">
    <property type="entry name" value="Nucleic acid-binding proteins"/>
    <property type="match status" value="1"/>
</dbReference>
<dbReference type="PROSITE" id="PS00697">
    <property type="entry name" value="DNA_LIGASE_A1"/>
    <property type="match status" value="1"/>
</dbReference>
<dbReference type="PROSITE" id="PS50160">
    <property type="entry name" value="DNA_LIGASE_A3"/>
    <property type="match status" value="1"/>
</dbReference>
<proteinExistence type="inferred from homology"/>
<name>DNLI_HALSA</name>
<protein>
    <recommendedName>
        <fullName evidence="1">DNA ligase</fullName>
        <ecNumber evidence="1">6.5.1.1</ecNumber>
    </recommendedName>
    <alternativeName>
        <fullName evidence="1">Polydeoxyribonucleotide synthase [ATP]</fullName>
    </alternativeName>
</protein>